<reference key="1">
    <citation type="journal article" date="2006" name="Proc. Natl. Acad. Sci. U.S.A.">
        <title>Identification of genes subject to positive selection in uropathogenic strains of Escherichia coli: a comparative genomics approach.</title>
        <authorList>
            <person name="Chen S.L."/>
            <person name="Hung C.-S."/>
            <person name="Xu J."/>
            <person name="Reigstad C.S."/>
            <person name="Magrini V."/>
            <person name="Sabo A."/>
            <person name="Blasiar D."/>
            <person name="Bieri T."/>
            <person name="Meyer R.R."/>
            <person name="Ozersky P."/>
            <person name="Armstrong J.R."/>
            <person name="Fulton R.S."/>
            <person name="Latreille J.P."/>
            <person name="Spieth J."/>
            <person name="Hooton T.M."/>
            <person name="Mardis E.R."/>
            <person name="Hultgren S.J."/>
            <person name="Gordon J.I."/>
        </authorList>
    </citation>
    <scope>NUCLEOTIDE SEQUENCE [LARGE SCALE GENOMIC DNA]</scope>
    <source>
        <strain>UTI89 / UPEC</strain>
    </source>
</reference>
<gene>
    <name evidence="1" type="primary">yhaM</name>
    <name type="ordered locus">UTI89_C3545</name>
</gene>
<accession>Q1R6M3</accession>
<proteinExistence type="inferred from homology"/>
<sequence>MFDSTLNPLWQRYILAVQEEVKPALGCTEPISLALAAAVAAAELEGPVERVEAWVSPNLMKNGLGVTVPGTGMVGLPIAAALGALGGNANAGLEVLKDATAQAISDAKALLAAGKVSVKIQEPCDEILFSRAKVWNGEKWACVTIVGGHTNIVHIETHNGVVFTQQACVTEGEQESPLTVLSRTTLAEILKFVNEVPFAAIRFILDSAKLNCALSQEGLSGNWGLHIGATLEKQCARGLLAKDLSSSIVIRTSAASDARMGGATLPAMSNSGSGNQGITATMPVVVVAEHFGADDERLARALMLSHLSAIYIHNQLPRLSALCAATTAAMGAAAGMAWLVDGRYETISMAISSMIGDVSGMICDGASNSCAMKVSTSASAAWKAVLMALDDTAVTGNEGIVAHDVEQSIANLCALASHSMQQTDRQIIEIMASKAR</sequence>
<name>YHAM_ECOUT</name>
<organism>
    <name type="scientific">Escherichia coli (strain UTI89 / UPEC)</name>
    <dbReference type="NCBI Taxonomy" id="364106"/>
    <lineage>
        <taxon>Bacteria</taxon>
        <taxon>Pseudomonadati</taxon>
        <taxon>Pseudomonadota</taxon>
        <taxon>Gammaproteobacteria</taxon>
        <taxon>Enterobacterales</taxon>
        <taxon>Enterobacteriaceae</taxon>
        <taxon>Escherichia</taxon>
    </lineage>
</organism>
<evidence type="ECO:0000255" key="1">
    <source>
        <dbReference type="HAMAP-Rule" id="MF_01845"/>
    </source>
</evidence>
<comment type="similarity">
    <text evidence="1">Belongs to the UPF0597 family.</text>
</comment>
<protein>
    <recommendedName>
        <fullName evidence="1">UPF0597 protein YhaM</fullName>
    </recommendedName>
</protein>
<feature type="chain" id="PRO_0000339819" description="UPF0597 protein YhaM">
    <location>
        <begin position="1"/>
        <end position="436"/>
    </location>
</feature>
<dbReference type="EMBL" id="CP000243">
    <property type="protein sequence ID" value="ABE08991.1"/>
    <property type="molecule type" value="Genomic_DNA"/>
</dbReference>
<dbReference type="KEGG" id="eci:UTI89_C3545"/>
<dbReference type="HOGENOM" id="CLU_051840_0_0_6"/>
<dbReference type="Proteomes" id="UP000001952">
    <property type="component" value="Chromosome"/>
</dbReference>
<dbReference type="GO" id="GO:0080146">
    <property type="term" value="F:L-cysteine desulfhydrase activity"/>
    <property type="evidence" value="ECO:0007669"/>
    <property type="project" value="TreeGrafter"/>
</dbReference>
<dbReference type="GO" id="GO:0019450">
    <property type="term" value="P:L-cysteine catabolic process to pyruvate"/>
    <property type="evidence" value="ECO:0007669"/>
    <property type="project" value="TreeGrafter"/>
</dbReference>
<dbReference type="HAMAP" id="MF_01845">
    <property type="entry name" value="UPF0597"/>
    <property type="match status" value="1"/>
</dbReference>
<dbReference type="InterPro" id="IPR005130">
    <property type="entry name" value="Ser_deHydtase-like_asu"/>
</dbReference>
<dbReference type="InterPro" id="IPR021144">
    <property type="entry name" value="UPF0597"/>
</dbReference>
<dbReference type="PANTHER" id="PTHR30501">
    <property type="entry name" value="UPF0597 PROTEIN YHAM"/>
    <property type="match status" value="1"/>
</dbReference>
<dbReference type="PANTHER" id="PTHR30501:SF2">
    <property type="entry name" value="UPF0597 PROTEIN YHAM"/>
    <property type="match status" value="1"/>
</dbReference>
<dbReference type="Pfam" id="PF03313">
    <property type="entry name" value="SDH_alpha"/>
    <property type="match status" value="1"/>
</dbReference>
<dbReference type="PIRSF" id="PIRSF006054">
    <property type="entry name" value="UCP006054"/>
    <property type="match status" value="1"/>
</dbReference>